<evidence type="ECO:0000255" key="1">
    <source>
        <dbReference type="HAMAP-Rule" id="MF_01696"/>
    </source>
</evidence>
<name>MSHB_NOCSJ</name>
<keyword id="KW-0378">Hydrolase</keyword>
<keyword id="KW-0479">Metal-binding</keyword>
<keyword id="KW-1185">Reference proteome</keyword>
<keyword id="KW-0862">Zinc</keyword>
<sequence>MTFDQRLLLVHAHPDDESIGQGATMAKYAAEGRGVTLVTCTGGEMGEILVPELTHLAADQEDRLGEHRRGELDAAMAELGVTDHRYLGGFGTYRDSGMKWHEDGHAVPADDIHQNAFWHADLTEAADHLVAVIREVRPQVLVTYDQFGGYGHPDHIQAHRVATYAAALAAVPSYRKDLGAAWDIAKIYWGAMSESRMRAALRALREAGDTTAFEGMDPDGPLPPFVTADEDLSAVVDAQEHVEAKLAAMRAHATQITTDGPFFALSNNVGNVAWGLEFFRLAKGERGELNQDGLETDLFAGL</sequence>
<proteinExistence type="inferred from homology"/>
<comment type="function">
    <text evidence="1">Catalyzes the deacetylation of 1D-myo-inositol 2-acetamido-2-deoxy-alpha-D-glucopyranoside (GlcNAc-Ins) in the mycothiol biosynthesis pathway.</text>
</comment>
<comment type="catalytic activity">
    <reaction evidence="1">
        <text>1D-myo-inositol 2-acetamido-2-deoxy-alpha-D-glucopyranoside + H2O = 1D-myo-inositol 2-amino-2-deoxy-alpha-D-glucopyranoside + acetate</text>
        <dbReference type="Rhea" id="RHEA:26180"/>
        <dbReference type="ChEBI" id="CHEBI:15377"/>
        <dbReference type="ChEBI" id="CHEBI:30089"/>
        <dbReference type="ChEBI" id="CHEBI:52442"/>
        <dbReference type="ChEBI" id="CHEBI:58886"/>
        <dbReference type="EC" id="3.5.1.103"/>
    </reaction>
</comment>
<comment type="cofactor">
    <cofactor evidence="1">
        <name>Zn(2+)</name>
        <dbReference type="ChEBI" id="CHEBI:29105"/>
    </cofactor>
    <text evidence="1">Binds 1 zinc ion per subunit.</text>
</comment>
<comment type="similarity">
    <text evidence="1">Belongs to the MshB deacetylase family.</text>
</comment>
<organism>
    <name type="scientific">Nocardioides sp. (strain ATCC BAA-499 / JS614)</name>
    <dbReference type="NCBI Taxonomy" id="196162"/>
    <lineage>
        <taxon>Bacteria</taxon>
        <taxon>Bacillati</taxon>
        <taxon>Actinomycetota</taxon>
        <taxon>Actinomycetes</taxon>
        <taxon>Propionibacteriales</taxon>
        <taxon>Nocardioidaceae</taxon>
        <taxon>Nocardioides</taxon>
    </lineage>
</organism>
<reference key="1">
    <citation type="submission" date="2006-12" db="EMBL/GenBank/DDBJ databases">
        <title>Complete sequence of chromosome 1 of Nocardioides sp. JS614.</title>
        <authorList>
            <person name="Copeland A."/>
            <person name="Lucas S."/>
            <person name="Lapidus A."/>
            <person name="Barry K."/>
            <person name="Detter J.C."/>
            <person name="Glavina del Rio T."/>
            <person name="Hammon N."/>
            <person name="Israni S."/>
            <person name="Dalin E."/>
            <person name="Tice H."/>
            <person name="Pitluck S."/>
            <person name="Thompson L.S."/>
            <person name="Brettin T."/>
            <person name="Bruce D."/>
            <person name="Han C."/>
            <person name="Tapia R."/>
            <person name="Schmutz J."/>
            <person name="Larimer F."/>
            <person name="Land M."/>
            <person name="Hauser L."/>
            <person name="Kyrpides N."/>
            <person name="Kim E."/>
            <person name="Mattes T."/>
            <person name="Gossett J."/>
            <person name="Richardson P."/>
        </authorList>
    </citation>
    <scope>NUCLEOTIDE SEQUENCE [LARGE SCALE GENOMIC DNA]</scope>
    <source>
        <strain>ATCC BAA-499 / JS614</strain>
    </source>
</reference>
<feature type="chain" id="PRO_0000400212" description="1D-myo-inositol 2-acetamido-2-deoxy-alpha-D-glucopyranoside deacetylase">
    <location>
        <begin position="1"/>
        <end position="302"/>
    </location>
</feature>
<feature type="binding site" evidence="1">
    <location>
        <position position="13"/>
    </location>
    <ligand>
        <name>Zn(2+)</name>
        <dbReference type="ChEBI" id="CHEBI:29105"/>
    </ligand>
</feature>
<feature type="binding site" evidence="1">
    <location>
        <position position="16"/>
    </location>
    <ligand>
        <name>Zn(2+)</name>
        <dbReference type="ChEBI" id="CHEBI:29105"/>
    </ligand>
</feature>
<feature type="binding site" evidence="1">
    <location>
        <position position="155"/>
    </location>
    <ligand>
        <name>Zn(2+)</name>
        <dbReference type="ChEBI" id="CHEBI:29105"/>
    </ligand>
</feature>
<accession>A1SFT8</accession>
<dbReference type="EC" id="3.5.1.103" evidence="1"/>
<dbReference type="EMBL" id="CP000509">
    <property type="protein sequence ID" value="ABL80673.1"/>
    <property type="molecule type" value="Genomic_DNA"/>
</dbReference>
<dbReference type="RefSeq" id="WP_011754621.1">
    <property type="nucleotide sequence ID" value="NC_008699.1"/>
</dbReference>
<dbReference type="SMR" id="A1SFT8"/>
<dbReference type="STRING" id="196162.Noca_1157"/>
<dbReference type="KEGG" id="nca:Noca_1157"/>
<dbReference type="eggNOG" id="COG2120">
    <property type="taxonomic scope" value="Bacteria"/>
</dbReference>
<dbReference type="HOGENOM" id="CLU_049311_2_1_11"/>
<dbReference type="OrthoDB" id="158614at2"/>
<dbReference type="Proteomes" id="UP000000640">
    <property type="component" value="Chromosome"/>
</dbReference>
<dbReference type="GO" id="GO:0035595">
    <property type="term" value="F:N-acetylglucosaminylinositol deacetylase activity"/>
    <property type="evidence" value="ECO:0007669"/>
    <property type="project" value="UniProtKB-EC"/>
</dbReference>
<dbReference type="GO" id="GO:0008270">
    <property type="term" value="F:zinc ion binding"/>
    <property type="evidence" value="ECO:0007669"/>
    <property type="project" value="UniProtKB-UniRule"/>
</dbReference>
<dbReference type="GO" id="GO:0010125">
    <property type="term" value="P:mycothiol biosynthetic process"/>
    <property type="evidence" value="ECO:0007669"/>
    <property type="project" value="UniProtKB-UniRule"/>
</dbReference>
<dbReference type="Gene3D" id="3.40.50.10320">
    <property type="entry name" value="LmbE-like"/>
    <property type="match status" value="1"/>
</dbReference>
<dbReference type="HAMAP" id="MF_01696">
    <property type="entry name" value="MshB"/>
    <property type="match status" value="1"/>
</dbReference>
<dbReference type="InterPro" id="IPR003737">
    <property type="entry name" value="GlcNAc_PI_deacetylase-related"/>
</dbReference>
<dbReference type="InterPro" id="IPR024078">
    <property type="entry name" value="LmbE-like_dom_sf"/>
</dbReference>
<dbReference type="InterPro" id="IPR017810">
    <property type="entry name" value="Mycothiol_biosynthesis_MshB"/>
</dbReference>
<dbReference type="NCBIfam" id="TIGR03445">
    <property type="entry name" value="mycothiol_MshB"/>
    <property type="match status" value="1"/>
</dbReference>
<dbReference type="PANTHER" id="PTHR12993:SF26">
    <property type="entry name" value="1D-MYO-INOSITOL 2-ACETAMIDO-2-DEOXY-ALPHA-D-GLUCOPYRANOSIDE DEACETYLASE"/>
    <property type="match status" value="1"/>
</dbReference>
<dbReference type="PANTHER" id="PTHR12993">
    <property type="entry name" value="N-ACETYLGLUCOSAMINYL-PHOSPHATIDYLINOSITOL DE-N-ACETYLASE-RELATED"/>
    <property type="match status" value="1"/>
</dbReference>
<dbReference type="Pfam" id="PF02585">
    <property type="entry name" value="PIG-L"/>
    <property type="match status" value="1"/>
</dbReference>
<dbReference type="SUPFAM" id="SSF102588">
    <property type="entry name" value="LmbE-like"/>
    <property type="match status" value="1"/>
</dbReference>
<protein>
    <recommendedName>
        <fullName evidence="1">1D-myo-inositol 2-acetamido-2-deoxy-alpha-D-glucopyranoside deacetylase</fullName>
        <shortName evidence="1">GlcNAc-Ins deacetylase</shortName>
        <ecNumber evidence="1">3.5.1.103</ecNumber>
    </recommendedName>
    <alternativeName>
        <fullName>N-acetyl-1-D-myo-inositol 2-amino-2-deoxy-alpha-D-glucopyranoside deacetylase</fullName>
    </alternativeName>
</protein>
<gene>
    <name evidence="1" type="primary">mshB</name>
    <name type="ordered locus">Noca_1157</name>
</gene>